<comment type="function">
    <text evidence="1">Catalyzes the reversible phosphatidyl group transfer from one phosphatidylglycerol molecule to another to form cardiolipin (CL) (diphosphatidylglycerol) and glycerol.</text>
</comment>
<comment type="catalytic activity">
    <reaction evidence="1">
        <text>2 a 1,2-diacyl-sn-glycero-3-phospho-(1'-sn-glycerol) = a cardiolipin + glycerol</text>
        <dbReference type="Rhea" id="RHEA:31451"/>
        <dbReference type="ChEBI" id="CHEBI:17754"/>
        <dbReference type="ChEBI" id="CHEBI:62237"/>
        <dbReference type="ChEBI" id="CHEBI:64716"/>
    </reaction>
</comment>
<comment type="subcellular location">
    <subcellularLocation>
        <location evidence="1">Cell inner membrane</location>
        <topology evidence="1">Multi-pass membrane protein</topology>
    </subcellularLocation>
</comment>
<comment type="similarity">
    <text evidence="1">Belongs to the phospholipase D family. Cardiolipin synthase subfamily. ClsA sub-subfamily.</text>
</comment>
<protein>
    <recommendedName>
        <fullName evidence="1">Cardiolipin synthase A</fullName>
        <shortName evidence="1">CL synthase</shortName>
        <ecNumber evidence="1">2.7.8.-</ecNumber>
    </recommendedName>
</protein>
<feature type="chain" id="PRO_1000118593" description="Cardiolipin synthase A">
    <location>
        <begin position="1"/>
        <end position="479"/>
    </location>
</feature>
<feature type="transmembrane region" description="Helical" evidence="1">
    <location>
        <begin position="8"/>
        <end position="28"/>
    </location>
</feature>
<feature type="transmembrane region" description="Helical" evidence="1">
    <location>
        <begin position="38"/>
        <end position="58"/>
    </location>
</feature>
<feature type="domain" description="PLD phosphodiesterase 1" evidence="1">
    <location>
        <begin position="218"/>
        <end position="245"/>
    </location>
</feature>
<feature type="domain" description="PLD phosphodiesterase 2" evidence="1">
    <location>
        <begin position="392"/>
        <end position="419"/>
    </location>
</feature>
<feature type="active site" evidence="1">
    <location>
        <position position="223"/>
    </location>
</feature>
<feature type="active site" evidence="1">
    <location>
        <position position="225"/>
    </location>
</feature>
<feature type="active site" evidence="1">
    <location>
        <position position="230"/>
    </location>
</feature>
<feature type="active site" evidence="1">
    <location>
        <position position="397"/>
    </location>
</feature>
<feature type="active site" evidence="1">
    <location>
        <position position="399"/>
    </location>
</feature>
<feature type="active site" evidence="1">
    <location>
        <position position="404"/>
    </location>
</feature>
<name>CLSA_PSEP1</name>
<gene>
    <name evidence="1" type="primary">clsA</name>
    <name type="synonym">cls</name>
    <name type="ordered locus">Pput_5272</name>
</gene>
<keyword id="KW-0997">Cell inner membrane</keyword>
<keyword id="KW-1003">Cell membrane</keyword>
<keyword id="KW-0444">Lipid biosynthesis</keyword>
<keyword id="KW-0443">Lipid metabolism</keyword>
<keyword id="KW-0472">Membrane</keyword>
<keyword id="KW-0594">Phospholipid biosynthesis</keyword>
<keyword id="KW-1208">Phospholipid metabolism</keyword>
<keyword id="KW-0677">Repeat</keyword>
<keyword id="KW-0808">Transferase</keyword>
<keyword id="KW-0812">Transmembrane</keyword>
<keyword id="KW-1133">Transmembrane helix</keyword>
<proteinExistence type="inferred from homology"/>
<reference key="1">
    <citation type="submission" date="2007-05" db="EMBL/GenBank/DDBJ databases">
        <title>Complete sequence of Pseudomonas putida F1.</title>
        <authorList>
            <consortium name="US DOE Joint Genome Institute"/>
            <person name="Copeland A."/>
            <person name="Lucas S."/>
            <person name="Lapidus A."/>
            <person name="Barry K."/>
            <person name="Detter J.C."/>
            <person name="Glavina del Rio T."/>
            <person name="Hammon N."/>
            <person name="Israni S."/>
            <person name="Dalin E."/>
            <person name="Tice H."/>
            <person name="Pitluck S."/>
            <person name="Chain P."/>
            <person name="Malfatti S."/>
            <person name="Shin M."/>
            <person name="Vergez L."/>
            <person name="Schmutz J."/>
            <person name="Larimer F."/>
            <person name="Land M."/>
            <person name="Hauser L."/>
            <person name="Kyrpides N."/>
            <person name="Lykidis A."/>
            <person name="Parales R."/>
            <person name="Richardson P."/>
        </authorList>
    </citation>
    <scope>NUCLEOTIDE SEQUENCE [LARGE SCALE GENOMIC DNA]</scope>
    <source>
        <strain>ATCC 700007 / DSM 6899 / JCM 31910 / BCRC 17059 / LMG 24140 / F1</strain>
    </source>
</reference>
<evidence type="ECO:0000255" key="1">
    <source>
        <dbReference type="HAMAP-Rule" id="MF_00190"/>
    </source>
</evidence>
<organism>
    <name type="scientific">Pseudomonas putida (strain ATCC 700007 / DSM 6899 / JCM 31910 / BCRC 17059 / LMG 24140 / F1)</name>
    <dbReference type="NCBI Taxonomy" id="351746"/>
    <lineage>
        <taxon>Bacteria</taxon>
        <taxon>Pseudomonadati</taxon>
        <taxon>Pseudomonadota</taxon>
        <taxon>Gammaproteobacteria</taxon>
        <taxon>Pseudomonadales</taxon>
        <taxon>Pseudomonadaceae</taxon>
        <taxon>Pseudomonas</taxon>
    </lineage>
</organism>
<dbReference type="EC" id="2.7.8.-" evidence="1"/>
<dbReference type="EMBL" id="CP000712">
    <property type="protein sequence ID" value="ABQ81390.1"/>
    <property type="molecule type" value="Genomic_DNA"/>
</dbReference>
<dbReference type="SMR" id="A5WB80"/>
<dbReference type="KEGG" id="ppf:Pput_5272"/>
<dbReference type="eggNOG" id="COG1502">
    <property type="taxonomic scope" value="Bacteria"/>
</dbReference>
<dbReference type="HOGENOM" id="CLU_038053_1_0_6"/>
<dbReference type="GO" id="GO:0005886">
    <property type="term" value="C:plasma membrane"/>
    <property type="evidence" value="ECO:0007669"/>
    <property type="project" value="UniProtKB-SubCell"/>
</dbReference>
<dbReference type="GO" id="GO:0008808">
    <property type="term" value="F:cardiolipin synthase activity"/>
    <property type="evidence" value="ECO:0007669"/>
    <property type="project" value="InterPro"/>
</dbReference>
<dbReference type="GO" id="GO:0032049">
    <property type="term" value="P:cardiolipin biosynthetic process"/>
    <property type="evidence" value="ECO:0007669"/>
    <property type="project" value="InterPro"/>
</dbReference>
<dbReference type="CDD" id="cd09155">
    <property type="entry name" value="PLDc_PaCLS_like_1"/>
    <property type="match status" value="1"/>
</dbReference>
<dbReference type="CDD" id="cd09161">
    <property type="entry name" value="PLDc_PaCLS_like_2"/>
    <property type="match status" value="1"/>
</dbReference>
<dbReference type="FunFam" id="3.30.870.10:FF:000014">
    <property type="entry name" value="Cardiolipin synthase"/>
    <property type="match status" value="1"/>
</dbReference>
<dbReference type="FunFam" id="3.30.870.10:FF:000021">
    <property type="entry name" value="Cardiolipin synthase"/>
    <property type="match status" value="1"/>
</dbReference>
<dbReference type="Gene3D" id="3.30.870.10">
    <property type="entry name" value="Endonuclease Chain A"/>
    <property type="match status" value="2"/>
</dbReference>
<dbReference type="HAMAP" id="MF_00190">
    <property type="entry name" value="Cardiolipin_synth_ClsA"/>
    <property type="match status" value="1"/>
</dbReference>
<dbReference type="InterPro" id="IPR022924">
    <property type="entry name" value="Cardiolipin_synthase"/>
</dbReference>
<dbReference type="InterPro" id="IPR030840">
    <property type="entry name" value="CL_synthase_A"/>
</dbReference>
<dbReference type="InterPro" id="IPR027379">
    <property type="entry name" value="CLS_N"/>
</dbReference>
<dbReference type="InterPro" id="IPR025202">
    <property type="entry name" value="PLD-like_dom"/>
</dbReference>
<dbReference type="InterPro" id="IPR001736">
    <property type="entry name" value="PLipase_D/transphosphatidylase"/>
</dbReference>
<dbReference type="NCBIfam" id="TIGR04265">
    <property type="entry name" value="bac_cardiolipin"/>
    <property type="match status" value="1"/>
</dbReference>
<dbReference type="PANTHER" id="PTHR21248">
    <property type="entry name" value="CARDIOLIPIN SYNTHASE"/>
    <property type="match status" value="1"/>
</dbReference>
<dbReference type="PANTHER" id="PTHR21248:SF22">
    <property type="entry name" value="PHOSPHOLIPASE D"/>
    <property type="match status" value="1"/>
</dbReference>
<dbReference type="Pfam" id="PF13091">
    <property type="entry name" value="PLDc_2"/>
    <property type="match status" value="2"/>
</dbReference>
<dbReference type="Pfam" id="PF13396">
    <property type="entry name" value="PLDc_N"/>
    <property type="match status" value="1"/>
</dbReference>
<dbReference type="SMART" id="SM00155">
    <property type="entry name" value="PLDc"/>
    <property type="match status" value="2"/>
</dbReference>
<dbReference type="SUPFAM" id="SSF56024">
    <property type="entry name" value="Phospholipase D/nuclease"/>
    <property type="match status" value="2"/>
</dbReference>
<dbReference type="PROSITE" id="PS50035">
    <property type="entry name" value="PLD"/>
    <property type="match status" value="2"/>
</dbReference>
<sequence length="479" mass="54127">MDYHSPYFFGYLLGMIHLLGIVAALHALFTVRTAQGAIAWAMPLLFIPYLTLIPYLIFGARSFYAYIKARRQANQEMHVAMANLNWRPWVEEALTARESESYAALRAMPKLGRMPCLANNQVKLLINGKATFDAIFAAIEKARDVVLVQFFIIHDDTLGKALQQLLLRKAAEGVQVFVLYDRVGSHALPASYSQMLRDGGVQIHAFATRRGWFNRFQVNFRNHRKIVVVDGLLGFIGGHNVGDEYLGEHPQLSPWRDTHVQISGPVLACLQESFAEDWYWATRQLPPLILPDTYPDNGVLCQALASGPADPQETCSLFFLEAIHSATRRVWITSPYFIPDEAVFAALRLAVLRGVDVRVLIPSRPDHRIVYAASSLFAFEAVRAGVRMFRYQPGFLHQKVVLVDDDVSAIGSANLDNRSFRLNFEITLLTVDRGFADQVEHMLHEDFEHAREITAEDTQDTHRLQQLGMRIARLISPIL</sequence>
<accession>A5WB80</accession>